<gene>
    <name type="primary">folT</name>
    <name type="ordered locus">NT01CX_2426</name>
</gene>
<accession>A0Q1J7</accession>
<protein>
    <recommendedName>
        <fullName>Folate transporter FolT</fullName>
    </recommendedName>
    <alternativeName>
        <fullName>Folate ECF transporter S component FolT</fullName>
    </alternativeName>
</protein>
<evidence type="ECO:0000250" key="1"/>
<evidence type="ECO:0000255" key="2"/>
<evidence type="ECO:0000305" key="3"/>
<dbReference type="EMBL" id="CP000382">
    <property type="protein sequence ID" value="ABK62097.1"/>
    <property type="molecule type" value="Genomic_DNA"/>
</dbReference>
<dbReference type="RefSeq" id="WP_011722493.1">
    <property type="nucleotide sequence ID" value="NC_008593.1"/>
</dbReference>
<dbReference type="SMR" id="A0Q1J7"/>
<dbReference type="STRING" id="386415.NT01CX_2426"/>
<dbReference type="KEGG" id="cno:NT01CX_2426"/>
<dbReference type="eggNOG" id="COG3601">
    <property type="taxonomic scope" value="Bacteria"/>
</dbReference>
<dbReference type="HOGENOM" id="CLU_098232_3_0_9"/>
<dbReference type="Proteomes" id="UP000008220">
    <property type="component" value="Chromosome"/>
</dbReference>
<dbReference type="GO" id="GO:0005886">
    <property type="term" value="C:plasma membrane"/>
    <property type="evidence" value="ECO:0007669"/>
    <property type="project" value="UniProtKB-SubCell"/>
</dbReference>
<dbReference type="GO" id="GO:0005542">
    <property type="term" value="F:folic acid binding"/>
    <property type="evidence" value="ECO:0007669"/>
    <property type="project" value="UniProtKB-KW"/>
</dbReference>
<dbReference type="GO" id="GO:0022857">
    <property type="term" value="F:transmembrane transporter activity"/>
    <property type="evidence" value="ECO:0007669"/>
    <property type="project" value="InterPro"/>
</dbReference>
<dbReference type="Gene3D" id="1.10.1760.20">
    <property type="match status" value="1"/>
</dbReference>
<dbReference type="InterPro" id="IPR030949">
    <property type="entry name" value="ECF_S_folate_fam"/>
</dbReference>
<dbReference type="InterPro" id="IPR024529">
    <property type="entry name" value="ECF_trnsprt_substrate-spec"/>
</dbReference>
<dbReference type="NCBIfam" id="TIGR04518">
    <property type="entry name" value="ECF_S_folT_fam"/>
    <property type="match status" value="1"/>
</dbReference>
<dbReference type="Pfam" id="PF12822">
    <property type="entry name" value="ECF_trnsprt"/>
    <property type="match status" value="1"/>
</dbReference>
<proteinExistence type="evidence at protein level"/>
<keyword id="KW-1003">Cell membrane</keyword>
<keyword id="KW-0290">Folate-binding</keyword>
<keyword id="KW-0472">Membrane</keyword>
<keyword id="KW-1185">Reference proteome</keyword>
<keyword id="KW-0812">Transmembrane</keyword>
<keyword id="KW-1133">Transmembrane helix</keyword>
<keyword id="KW-0813">Transport</keyword>
<feature type="chain" id="PRO_0000409015" description="Folate transporter FolT">
    <location>
        <begin position="1"/>
        <end position="172"/>
    </location>
</feature>
<feature type="transmembrane region" description="Helical" evidence="2">
    <location>
        <begin position="6"/>
        <end position="26"/>
    </location>
</feature>
<feature type="transmembrane region" description="Helical" evidence="2">
    <location>
        <begin position="35"/>
        <end position="55"/>
    </location>
</feature>
<feature type="transmembrane region" description="Helical" evidence="2">
    <location>
        <begin position="71"/>
        <end position="91"/>
    </location>
</feature>
<feature type="transmembrane region" description="Helical" evidence="2">
    <location>
        <begin position="101"/>
        <end position="121"/>
    </location>
</feature>
<feature type="transmembrane region" description="Helical" evidence="2">
    <location>
        <begin position="131"/>
        <end position="151"/>
    </location>
</feature>
<comment type="function">
    <text evidence="1">Folate-binding protein that interacts with the energy-coupling factor (ECF) ABC-transporter complex. Unlike classic ABC transporters this ECF transporter provides the energy necessary to transport a number of different substrates. The substrates themselves are bound by transmembrane, not extracytoplasmic soluble proteins (By similarity).</text>
</comment>
<comment type="subunit">
    <text evidence="1">Forms a stable energy-coupling factor (ECF) transporter complex composed of a membrane-embedded substrate-binding protein (S component), two ATP-binding proteins (A components) and a transmembrane protein (T component).</text>
</comment>
<comment type="subcellular location">
    <subcellularLocation>
        <location evidence="3">Cell membrane</location>
        <topology evidence="3">Multi-pass membrane protein</topology>
    </subcellularLocation>
</comment>
<name>FOLT_CLONN</name>
<reference key="1">
    <citation type="journal article" date="2006" name="Nat. Biotechnol.">
        <title>The genome and transcriptomes of the anti-tumor agent Clostridium novyi-NT.</title>
        <authorList>
            <person name="Bettegowda C."/>
            <person name="Huang X."/>
            <person name="Lin J."/>
            <person name="Cheong I."/>
            <person name="Kohli M."/>
            <person name="Szabo S.A."/>
            <person name="Zhang X."/>
            <person name="Diaz L.A. Jr."/>
            <person name="Velculescu V.E."/>
            <person name="Parmigiani G."/>
            <person name="Kinzler K.W."/>
            <person name="Vogelstein B."/>
            <person name="Zhou S."/>
        </authorList>
    </citation>
    <scope>NUCLEOTIDE SEQUENCE [LARGE SCALE GENOMIC DNA]</scope>
    <source>
        <strain>NT</strain>
    </source>
</reference>
<reference key="2">
    <citation type="journal article" date="2008" name="J. Bacteriol.">
        <title>Identification of genes encoding the folate- and thiamine-binding membrane proteins in Firmicutes.</title>
        <authorList>
            <person name="Eudes A."/>
            <person name="Erkens G.B."/>
            <person name="Slotboom D.J."/>
            <person name="Rodionov D.A."/>
            <person name="Naponelli V."/>
            <person name="Hanson A.D."/>
        </authorList>
    </citation>
    <scope>FOLATE-BINDING</scope>
    <source>
        <strain>NT</strain>
    </source>
</reference>
<organism>
    <name type="scientific">Clostridium novyi (strain NT)</name>
    <dbReference type="NCBI Taxonomy" id="386415"/>
    <lineage>
        <taxon>Bacteria</taxon>
        <taxon>Bacillati</taxon>
        <taxon>Bacillota</taxon>
        <taxon>Clostridia</taxon>
        <taxon>Eubacteriales</taxon>
        <taxon>Clostridiaceae</taxon>
        <taxon>Clostridium</taxon>
    </lineage>
</organism>
<sequence>MKKVNVMIYMAFMITLEIVFTRFLSIQTPIIRIGFGFIPVAMSGMMFGPLLAGIVGATSDVLGMMIFPKGAYFPGFTLSAFVGAVIYGVFFYNKKVSVKRVLLAVGIITVLVNLTMNTIWLQILTGKAVKVLFVTRLVKEAIMFPIHAIVIYGAWKMVDRLEIMNKVAKFNK</sequence>